<name>IL17F_RAT</name>
<proteinExistence type="evidence at transcript level"/>
<feature type="signal peptide" evidence="4">
    <location>
        <begin position="1"/>
        <end position="28"/>
    </location>
</feature>
<feature type="chain" id="PRO_0000378105" description="Interleukin-17F" evidence="4">
    <location>
        <begin position="29"/>
        <end position="161"/>
    </location>
</feature>
<feature type="glycosylation site" description="N-linked (GlcNAc...) asparagine" evidence="1">
    <location>
        <position position="83"/>
    </location>
</feature>
<feature type="disulfide bond" description="Interchain (with C-135)" evidence="3">
    <location>
        <position position="45"/>
    </location>
</feature>
<feature type="disulfide bond" evidence="3">
    <location>
        <begin position="100"/>
        <end position="150"/>
    </location>
</feature>
<feature type="disulfide bond" evidence="3">
    <location>
        <begin position="105"/>
        <end position="152"/>
    </location>
</feature>
<feature type="disulfide bond" description="Interchain (with C-45)" evidence="3">
    <location>
        <position position="135"/>
    </location>
</feature>
<dbReference type="EMBL" id="BC091568">
    <property type="protein sequence ID" value="AAH91568.1"/>
    <property type="status" value="ALT_INIT"/>
    <property type="molecule type" value="mRNA"/>
</dbReference>
<dbReference type="RefSeq" id="NP_001015011.2">
    <property type="nucleotide sequence ID" value="NM_001015011.2"/>
</dbReference>
<dbReference type="SMR" id="Q5BJ95"/>
<dbReference type="FunCoup" id="Q5BJ95">
    <property type="interactions" value="9"/>
</dbReference>
<dbReference type="STRING" id="10116.ENSRNOP00000016717"/>
<dbReference type="GlyCosmos" id="Q5BJ95">
    <property type="glycosylation" value="1 site, No reported glycans"/>
</dbReference>
<dbReference type="GlyGen" id="Q5BJ95">
    <property type="glycosylation" value="1 site"/>
</dbReference>
<dbReference type="iPTMnet" id="Q5BJ95"/>
<dbReference type="PhosphoSitePlus" id="Q5BJ95"/>
<dbReference type="PaxDb" id="10116-ENSRNOP00000016717"/>
<dbReference type="Ensembl" id="ENSRNOT00000016717.6">
    <property type="protein sequence ID" value="ENSRNOP00000016717.7"/>
    <property type="gene ID" value="ENSRNOG00000012509.6"/>
</dbReference>
<dbReference type="GeneID" id="301291"/>
<dbReference type="KEGG" id="rno:301291"/>
<dbReference type="UCSC" id="RGD:1311398">
    <property type="organism name" value="rat"/>
</dbReference>
<dbReference type="AGR" id="RGD:1311398"/>
<dbReference type="CTD" id="112744"/>
<dbReference type="RGD" id="1311398">
    <property type="gene designation" value="Il17f"/>
</dbReference>
<dbReference type="eggNOG" id="ENOG502S5A0">
    <property type="taxonomic scope" value="Eukaryota"/>
</dbReference>
<dbReference type="GeneTree" id="ENSGT00940000156618"/>
<dbReference type="HOGENOM" id="CLU_118641_0_0_1"/>
<dbReference type="InParanoid" id="Q5BJ95"/>
<dbReference type="OMA" id="SPWDYNV"/>
<dbReference type="OrthoDB" id="62023at9989"/>
<dbReference type="PhylomeDB" id="Q5BJ95"/>
<dbReference type="TreeFam" id="TF314701"/>
<dbReference type="PRO" id="PR:Q5BJ95"/>
<dbReference type="Proteomes" id="UP000002494">
    <property type="component" value="Chromosome 9"/>
</dbReference>
<dbReference type="GO" id="GO:0005615">
    <property type="term" value="C:extracellular space"/>
    <property type="evidence" value="ECO:0000266"/>
    <property type="project" value="RGD"/>
</dbReference>
<dbReference type="GO" id="GO:0005125">
    <property type="term" value="F:cytokine activity"/>
    <property type="evidence" value="ECO:0000266"/>
    <property type="project" value="RGD"/>
</dbReference>
<dbReference type="GO" id="GO:0019955">
    <property type="term" value="F:cytokine binding"/>
    <property type="evidence" value="ECO:0000266"/>
    <property type="project" value="RGD"/>
</dbReference>
<dbReference type="GO" id="GO:0005126">
    <property type="term" value="F:cytokine receptor binding"/>
    <property type="evidence" value="ECO:0000266"/>
    <property type="project" value="RGD"/>
</dbReference>
<dbReference type="GO" id="GO:0046982">
    <property type="term" value="F:protein heterodimerization activity"/>
    <property type="evidence" value="ECO:0000266"/>
    <property type="project" value="RGD"/>
</dbReference>
<dbReference type="GO" id="GO:0042803">
    <property type="term" value="F:protein homodimerization activity"/>
    <property type="evidence" value="ECO:0000266"/>
    <property type="project" value="RGD"/>
</dbReference>
<dbReference type="GO" id="GO:0002250">
    <property type="term" value="P:adaptive immune response"/>
    <property type="evidence" value="ECO:0007669"/>
    <property type="project" value="UniProtKB-KW"/>
</dbReference>
<dbReference type="GO" id="GO:0051216">
    <property type="term" value="P:cartilage development"/>
    <property type="evidence" value="ECO:0000266"/>
    <property type="project" value="RGD"/>
</dbReference>
<dbReference type="GO" id="GO:0050829">
    <property type="term" value="P:defense response to Gram-negative bacterium"/>
    <property type="evidence" value="ECO:0000266"/>
    <property type="project" value="RGD"/>
</dbReference>
<dbReference type="GO" id="GO:0050830">
    <property type="term" value="P:defense response to Gram-positive bacterium"/>
    <property type="evidence" value="ECO:0000266"/>
    <property type="project" value="RGD"/>
</dbReference>
<dbReference type="GO" id="GO:0006954">
    <property type="term" value="P:inflammatory response"/>
    <property type="evidence" value="ECO:0007669"/>
    <property type="project" value="UniProtKB-KW"/>
</dbReference>
<dbReference type="GO" id="GO:0045087">
    <property type="term" value="P:innate immune response"/>
    <property type="evidence" value="ECO:0007669"/>
    <property type="project" value="UniProtKB-KW"/>
</dbReference>
<dbReference type="GO" id="GO:0097400">
    <property type="term" value="P:interleukin-17-mediated signaling pathway"/>
    <property type="evidence" value="ECO:0000266"/>
    <property type="project" value="RGD"/>
</dbReference>
<dbReference type="GO" id="GO:0016525">
    <property type="term" value="P:negative regulation of angiogenesis"/>
    <property type="evidence" value="ECO:0000266"/>
    <property type="project" value="RGD"/>
</dbReference>
<dbReference type="GO" id="GO:0002225">
    <property type="term" value="P:positive regulation of antimicrobial peptide production"/>
    <property type="evidence" value="ECO:0000266"/>
    <property type="project" value="RGD"/>
</dbReference>
<dbReference type="GO" id="GO:2000340">
    <property type="term" value="P:positive regulation of chemokine (C-X-C motif) ligand 1 production"/>
    <property type="evidence" value="ECO:0000266"/>
    <property type="project" value="RGD"/>
</dbReference>
<dbReference type="GO" id="GO:0001819">
    <property type="term" value="P:positive regulation of cytokine production"/>
    <property type="evidence" value="ECO:0000266"/>
    <property type="project" value="RGD"/>
</dbReference>
<dbReference type="GO" id="GO:1900017">
    <property type="term" value="P:positive regulation of cytokine production involved in inflammatory response"/>
    <property type="evidence" value="ECO:0000266"/>
    <property type="project" value="RGD"/>
</dbReference>
<dbReference type="GO" id="GO:0032755">
    <property type="term" value="P:positive regulation of interleukin-6 production"/>
    <property type="evidence" value="ECO:0000266"/>
    <property type="project" value="RGD"/>
</dbReference>
<dbReference type="GO" id="GO:0032761">
    <property type="term" value="P:positive regulation of lymphotoxin A production"/>
    <property type="evidence" value="ECO:0000266"/>
    <property type="project" value="RGD"/>
</dbReference>
<dbReference type="GO" id="GO:0045944">
    <property type="term" value="P:positive regulation of transcription by RNA polymerase II"/>
    <property type="evidence" value="ECO:0000266"/>
    <property type="project" value="RGD"/>
</dbReference>
<dbReference type="GO" id="GO:0032645">
    <property type="term" value="P:regulation of granulocyte macrophage colony-stimulating factor production"/>
    <property type="evidence" value="ECO:0000266"/>
    <property type="project" value="RGD"/>
</dbReference>
<dbReference type="GO" id="GO:0032663">
    <property type="term" value="P:regulation of interleukin-2 production"/>
    <property type="evidence" value="ECO:0000266"/>
    <property type="project" value="RGD"/>
</dbReference>
<dbReference type="GO" id="GO:0032675">
    <property type="term" value="P:regulation of interleukin-6 production"/>
    <property type="evidence" value="ECO:0000266"/>
    <property type="project" value="RGD"/>
</dbReference>
<dbReference type="GO" id="GO:0032677">
    <property type="term" value="P:regulation of interleukin-8 production"/>
    <property type="evidence" value="ECO:0000266"/>
    <property type="project" value="RGD"/>
</dbReference>
<dbReference type="GO" id="GO:0017015">
    <property type="term" value="P:regulation of transforming growth factor beta receptor signaling pathway"/>
    <property type="evidence" value="ECO:0000266"/>
    <property type="project" value="RGD"/>
</dbReference>
<dbReference type="FunFam" id="2.10.90.10:FF:000038">
    <property type="entry name" value="Interleukin-17A"/>
    <property type="match status" value="1"/>
</dbReference>
<dbReference type="Gene3D" id="2.10.90.10">
    <property type="entry name" value="Cystine-knot cytokines"/>
    <property type="match status" value="1"/>
</dbReference>
<dbReference type="InterPro" id="IPR029034">
    <property type="entry name" value="Cystine-knot_cytokine"/>
</dbReference>
<dbReference type="InterPro" id="IPR020440">
    <property type="entry name" value="IL-17_chr"/>
</dbReference>
<dbReference type="InterPro" id="IPR010345">
    <property type="entry name" value="IL-17_fam"/>
</dbReference>
<dbReference type="Pfam" id="PF06083">
    <property type="entry name" value="IL17"/>
    <property type="match status" value="1"/>
</dbReference>
<dbReference type="PRINTS" id="PR01932">
    <property type="entry name" value="INTRLEUKIN17"/>
</dbReference>
<dbReference type="SUPFAM" id="SSF57501">
    <property type="entry name" value="Cystine-knot cytokines"/>
    <property type="match status" value="1"/>
</dbReference>
<keyword id="KW-1064">Adaptive immunity</keyword>
<keyword id="KW-0202">Cytokine</keyword>
<keyword id="KW-1015">Disulfide bond</keyword>
<keyword id="KW-0325">Glycoprotein</keyword>
<keyword id="KW-0391">Immunity</keyword>
<keyword id="KW-0395">Inflammatory response</keyword>
<keyword id="KW-0399">Innate immunity</keyword>
<keyword id="KW-1185">Reference proteome</keyword>
<keyword id="KW-0964">Secreted</keyword>
<keyword id="KW-0732">Signal</keyword>
<reference key="1">
    <citation type="journal article" date="2004" name="Genome Res.">
        <title>The status, quality, and expansion of the NIH full-length cDNA project: the Mammalian Gene Collection (MGC).</title>
        <authorList>
            <consortium name="The MGC Project Team"/>
        </authorList>
    </citation>
    <scope>NUCLEOTIDE SEQUENCE [LARGE SCALE MRNA]</scope>
    <source>
        <tissue>Placenta</tissue>
    </source>
</reference>
<protein>
    <recommendedName>
        <fullName>Interleukin-17F</fullName>
        <shortName>IL-17F</shortName>
    </recommendedName>
</protein>
<gene>
    <name type="primary">Il17f</name>
</gene>
<comment type="function">
    <text evidence="2 3">Effector cytokine of innate and adaptive immune system involved in antimicrobial host defense and maintenance of tissue integrity. IL17A-IL17F signals via IL17RA-IL17RC heterodimeric receptor complex, triggering homotypic interaction of IL17RA and IL17RC chains with TRAF3IP2 adapter through SEFIR domains. This leads to downstream TRAF6-mediated activation of NF-kappa-B and MAPkinase pathways ultimately resulting in transcriptional activation of cytokines, chemokines, antimicrobial peptides and matrix metalloproteinases, with potential strong immune inflammation. IL17A-IL17F is primarily involved in host defense against extracellular bacteria and fungi by inducing neutrophilic inflammation. As signature effector cytokine of T-helper 17 cells (Th17), primarily induces neutrophil activation and recruitment at infection and inflammatory sites. Stimulates the production of antimicrobial beta-defensins DEFB1, DEFB103A, and DEFB104A by mucosal epithelial cells, limiting the entry of microbes through the epithelial barriers. IL17F homodimer can signal via IL17RC homodimeric receptor complex, triggering downstream activation of TRAF6 and NF-kappa-B signaling pathway. Via IL17RC induces transcriptional activation of IL33, a potent cytokine that stimulates group 2 innate lymphoid cells and adaptive T-helper 2 cells involved in pulmonary allergic response to fungi. Likely via IL17RC, promotes sympathetic innervation of peripheral organs by coordinating the communication between gamma-delta T cells and parenchymal cells. Stimulates sympathetic innervation of thermogenic adipose tissue by driving TGFB1 expression. Regulates the composition of intestinal microbiota and immune tolerance by inducing antimicrobial proteins that specifically control the growth of commensal Firmicutes and Bacteroidetes.</text>
</comment>
<comment type="subunit">
    <text evidence="2 3">Homodimer; disulfide-linked (By similarity). Heterodimer with IL17A (IL17A-IL17F) (By similarity). Forms complexes with IL17RA and IL17RC receptors with 2:1 binding stoichiometry: two receptor chains for one interleukin molecule. IL17F homodimer forms predominantly complexes with IL17RC homodimer, whereas IL17A-IL17F favors complexes with IL17RA-IL17RC. IL17RA and IL17RC chains cannot distinguish between IL17A and IL17F molecules, potentially enabling the formation of topologically distinct complexes (By similarity).</text>
</comment>
<comment type="subcellular location">
    <subcellularLocation>
        <location evidence="2">Secreted</location>
    </subcellularLocation>
</comment>
<comment type="similarity">
    <text evidence="5">Belongs to the IL-17 family.</text>
</comment>
<comment type="sequence caution" evidence="5">
    <conflict type="erroneous initiation">
        <sequence resource="EMBL-CDS" id="AAH91568"/>
    </conflict>
</comment>
<evidence type="ECO:0000250" key="1"/>
<evidence type="ECO:0000250" key="2">
    <source>
        <dbReference type="UniProtKB" id="Q7TNI7"/>
    </source>
</evidence>
<evidence type="ECO:0000250" key="3">
    <source>
        <dbReference type="UniProtKB" id="Q96PD4"/>
    </source>
</evidence>
<evidence type="ECO:0000255" key="4"/>
<evidence type="ECO:0000305" key="5"/>
<organism>
    <name type="scientific">Rattus norvegicus</name>
    <name type="common">Rat</name>
    <dbReference type="NCBI Taxonomy" id="10116"/>
    <lineage>
        <taxon>Eukaryota</taxon>
        <taxon>Metazoa</taxon>
        <taxon>Chordata</taxon>
        <taxon>Craniata</taxon>
        <taxon>Vertebrata</taxon>
        <taxon>Euteleostomi</taxon>
        <taxon>Mammalia</taxon>
        <taxon>Eutheria</taxon>
        <taxon>Euarchontoglires</taxon>
        <taxon>Glires</taxon>
        <taxon>Rodentia</taxon>
        <taxon>Myomorpha</taxon>
        <taxon>Muroidea</taxon>
        <taxon>Muridae</taxon>
        <taxon>Murinae</taxon>
        <taxon>Rattus</taxon>
    </lineage>
</organism>
<accession>Q5BJ95</accession>
<sequence>MKGSCETTMVKSLLLLMLGFAIISSGAARRNPKVGLSALQKAGNCPPLEDNSVRVDIRIFNQNQGISVPRDFQNRSSSPWDYNITRDPDRFPSEIAEAQCRHSGCINAQGQEDGSMNSVPIQQEILVLRREPQGCSNSFRLEKMLIKVGCTCVTPIVHHAA</sequence>